<organism>
    <name type="scientific">Aspergillus terreus</name>
    <dbReference type="NCBI Taxonomy" id="33178"/>
    <lineage>
        <taxon>Eukaryota</taxon>
        <taxon>Fungi</taxon>
        <taxon>Dikarya</taxon>
        <taxon>Ascomycota</taxon>
        <taxon>Pezizomycotina</taxon>
        <taxon>Eurotiomycetes</taxon>
        <taxon>Eurotiomycetidae</taxon>
        <taxon>Eurotiales</taxon>
        <taxon>Aspergillaceae</taxon>
        <taxon>Aspergillus</taxon>
        <taxon>Aspergillus subgen. Circumdati</taxon>
    </lineage>
</organism>
<protein>
    <recommendedName>
        <fullName>Aristolochene synthase</fullName>
        <shortName>AS</shortName>
        <ecNumber>4.2.3.9</ecNumber>
    </recommendedName>
    <alternativeName>
        <fullName>Sesquiterpene cyclase</fullName>
    </alternativeName>
</protein>
<sequence length="320" mass="36481">MKKPNGTNGASSSLEPPPSTFQPLCHPLVEEVSKEVDGYFLQHWNFPNEKARKKFVAAGFSRVTCLYFPKALDDRIHFACRLLTVLFLIDDLLEYMSFEEGSAYNEKLIPISRGDVLPDRSIPVEYIIYDLWESMRAHDREMADEILEPVFLFMRAQTDRTRARPMGLGGYLEYRERDVGKELLAALMRFSMGLKLSPSELQRVREIDANCSKHLSVVNDIYSYEKELYTSKTAHSEGGILCTSVQILAQEADVTAEAAKRVLFVMCREWELRHQLLVARLSAEGLETPGLAAYVEGLEYQMSGNELWSQTTLRYSVVVD</sequence>
<dbReference type="EC" id="4.2.3.9"/>
<dbReference type="EMBL" id="AF198359">
    <property type="protein sequence ID" value="AAF13263.1"/>
    <property type="molecule type" value="mRNA"/>
</dbReference>
<dbReference type="EMBL" id="AF198360">
    <property type="protein sequence ID" value="AAF13264.1"/>
    <property type="molecule type" value="Genomic_DNA"/>
</dbReference>
<dbReference type="PDB" id="2E4O">
    <property type="method" value="X-ray"/>
    <property type="resolution" value="2.20 A"/>
    <property type="chains" value="A/B/C/D=1-320"/>
</dbReference>
<dbReference type="PDB" id="2OA6">
    <property type="method" value="X-ray"/>
    <property type="resolution" value="2.15 A"/>
    <property type="chains" value="A/B/C/D=1-320"/>
</dbReference>
<dbReference type="PDB" id="3BNX">
    <property type="method" value="X-ray"/>
    <property type="resolution" value="2.10 A"/>
    <property type="chains" value="A/B/C/D=1-320"/>
</dbReference>
<dbReference type="PDB" id="3BNY">
    <property type="method" value="X-ray"/>
    <property type="resolution" value="1.89 A"/>
    <property type="chains" value="A/B/C/D=1-320"/>
</dbReference>
<dbReference type="PDB" id="3CKE">
    <property type="method" value="X-ray"/>
    <property type="resolution" value="2.40 A"/>
    <property type="chains" value="A/B/C/D=1-320"/>
</dbReference>
<dbReference type="PDB" id="4KUX">
    <property type="method" value="X-ray"/>
    <property type="resolution" value="1.90 A"/>
    <property type="chains" value="A/B/C/D=14-320"/>
</dbReference>
<dbReference type="PDB" id="4KVD">
    <property type="method" value="X-ray"/>
    <property type="resolution" value="2.40 A"/>
    <property type="chains" value="A/B/C/D=14-320"/>
</dbReference>
<dbReference type="PDB" id="4KVI">
    <property type="method" value="X-ray"/>
    <property type="resolution" value="2.15 A"/>
    <property type="chains" value="A/B/C/D=14-320"/>
</dbReference>
<dbReference type="PDB" id="4KVW">
    <property type="method" value="X-ray"/>
    <property type="resolution" value="2.10 A"/>
    <property type="chains" value="A/B/C/D=14-320"/>
</dbReference>
<dbReference type="PDB" id="4KVY">
    <property type="method" value="X-ray"/>
    <property type="resolution" value="1.95 A"/>
    <property type="chains" value="A/B/C/D=14-320"/>
</dbReference>
<dbReference type="PDB" id="4KWD">
    <property type="method" value="X-ray"/>
    <property type="resolution" value="1.86 A"/>
    <property type="chains" value="A/B/C/D=14-320"/>
</dbReference>
<dbReference type="PDB" id="5IMI">
    <property type="method" value="X-ray"/>
    <property type="resolution" value="2.46 A"/>
    <property type="chains" value="A/B/C/D=14-320"/>
</dbReference>
<dbReference type="PDB" id="5IMN">
    <property type="method" value="X-ray"/>
    <property type="resolution" value="2.53 A"/>
    <property type="chains" value="A/B/C/D=14-320"/>
</dbReference>
<dbReference type="PDB" id="5IMP">
    <property type="method" value="X-ray"/>
    <property type="resolution" value="2.04 A"/>
    <property type="chains" value="A/B/C/D=14-320"/>
</dbReference>
<dbReference type="PDB" id="5IN8">
    <property type="method" value="X-ray"/>
    <property type="resolution" value="2.35 A"/>
    <property type="chains" value="A/B/C/D=14-320"/>
</dbReference>
<dbReference type="PDB" id="5IVG">
    <property type="method" value="X-ray"/>
    <property type="resolution" value="1.95 A"/>
    <property type="chains" value="A/B/C/D=14-320"/>
</dbReference>
<dbReference type="PDBsum" id="2E4O"/>
<dbReference type="PDBsum" id="2OA6"/>
<dbReference type="PDBsum" id="3BNX"/>
<dbReference type="PDBsum" id="3BNY"/>
<dbReference type="PDBsum" id="3CKE"/>
<dbReference type="PDBsum" id="4KUX"/>
<dbReference type="PDBsum" id="4KVD"/>
<dbReference type="PDBsum" id="4KVI"/>
<dbReference type="PDBsum" id="4KVW"/>
<dbReference type="PDBsum" id="4KVY"/>
<dbReference type="PDBsum" id="4KWD"/>
<dbReference type="PDBsum" id="5IMI"/>
<dbReference type="PDBsum" id="5IMN"/>
<dbReference type="PDBsum" id="5IMP"/>
<dbReference type="PDBsum" id="5IN8"/>
<dbReference type="PDBsum" id="5IVG"/>
<dbReference type="SMR" id="Q9UR08"/>
<dbReference type="BRENDA" id="4.2.3.9">
    <property type="organism ID" value="536"/>
</dbReference>
<dbReference type="SABIO-RK" id="Q9UR08"/>
<dbReference type="UniPathway" id="UPA00177">
    <property type="reaction ID" value="UER00582"/>
</dbReference>
<dbReference type="EvolutionaryTrace" id="Q9UR08"/>
<dbReference type="GO" id="GO:0045483">
    <property type="term" value="F:aristolochene synthase activity"/>
    <property type="evidence" value="ECO:0007669"/>
    <property type="project" value="UniProtKB-EC"/>
</dbReference>
<dbReference type="GO" id="GO:0046872">
    <property type="term" value="F:metal ion binding"/>
    <property type="evidence" value="ECO:0007669"/>
    <property type="project" value="UniProtKB-KW"/>
</dbReference>
<dbReference type="GO" id="GO:0008299">
    <property type="term" value="P:isoprenoid biosynthetic process"/>
    <property type="evidence" value="ECO:0007669"/>
    <property type="project" value="UniProtKB-ARBA"/>
</dbReference>
<dbReference type="CDD" id="cd00687">
    <property type="entry name" value="Terpene_cyclase_nonplant_C1"/>
    <property type="match status" value="1"/>
</dbReference>
<dbReference type="Gene3D" id="1.10.600.10">
    <property type="entry name" value="Farnesyl Diphosphate Synthase"/>
    <property type="match status" value="1"/>
</dbReference>
<dbReference type="InterPro" id="IPR008949">
    <property type="entry name" value="Isoprenoid_synthase_dom_sf"/>
</dbReference>
<dbReference type="InterPro" id="IPR034686">
    <property type="entry name" value="Terpene_cyclase-like_2"/>
</dbReference>
<dbReference type="PANTHER" id="PTHR35201:SF4">
    <property type="entry name" value="BETA-PINACENE SYNTHASE-RELATED"/>
    <property type="match status" value="1"/>
</dbReference>
<dbReference type="PANTHER" id="PTHR35201">
    <property type="entry name" value="TERPENE SYNTHASE"/>
    <property type="match status" value="1"/>
</dbReference>
<dbReference type="Pfam" id="PF19086">
    <property type="entry name" value="Terpene_syn_C_2"/>
    <property type="match status" value="1"/>
</dbReference>
<dbReference type="SFLD" id="SFLDS00005">
    <property type="entry name" value="Isoprenoid_Synthase_Type_I"/>
    <property type="match status" value="1"/>
</dbReference>
<dbReference type="SUPFAM" id="SSF48576">
    <property type="entry name" value="Terpenoid synthases"/>
    <property type="match status" value="1"/>
</dbReference>
<reference key="1">
    <citation type="journal article" date="2000" name="Arch. Biochem. Biophys.">
        <title>Aristolochene synthase: purification, molecular cloning, high-level expression in Escherichia coli, and characterization of the Aspergillus terreus cyclase.</title>
        <authorList>
            <person name="Cane D.E."/>
            <person name="Kang I."/>
        </authorList>
    </citation>
    <scope>NUCLEOTIDE SEQUENCE [GENOMIC DNA / MRNA]</scope>
    <scope>PROTEIN SEQUENCE OF 35-48; 183-195 AND 215-226</scope>
    <scope>FUNCTION</scope>
    <scope>CATALYTIC ACTIVITY</scope>
    <scope>BIOPHYSICOCHEMICAL PROPERTIES</scope>
    <source>
        <strain>ATCC 20516 / NRRL 11156</strain>
    </source>
</reference>
<reference key="2">
    <citation type="journal article" date="2004" name="J. Am. Chem. Soc.">
        <title>Aristolochene synthase: mechanistic analysis of active site residues by site-directed mutagenesis.</title>
        <authorList>
            <person name="Felicetti B."/>
            <person name="Cane D.E."/>
        </authorList>
    </citation>
    <scope>FUNCTION</scope>
    <scope>BIOPHYSICOCHEMICAL PROPERTIES</scope>
    <scope>MUTAGENESIS OF GLU-227</scope>
</reference>
<reference evidence="7 8" key="3">
    <citation type="journal article" date="2007" name="Biochemistry">
        <title>X-ray crystal structure of aristolochene synthase from Aspergillus terreus and evolution of templates for the cyclization of farnesyl diphosphate.</title>
        <authorList>
            <person name="Shishova E.Y."/>
            <person name="Di Costanzo L."/>
            <person name="Cane D.E."/>
            <person name="Christianson D.W."/>
        </authorList>
    </citation>
    <scope>X-RAY CRYSTALLOGRAPHY (2.15 ANGSTROMS) IN COMPLEX WITH MAGNESIUM</scope>
    <scope>SUBUNIT</scope>
</reference>
<reference evidence="9 10 11" key="4">
    <citation type="journal article" date="2008" name="J. Biol. Chem.">
        <title>X-ray crystallographic studies of substrate binding to aristolochene synthase suggest a metal ion binding sequence for catalysis.</title>
        <authorList>
            <person name="Shishova E.Y."/>
            <person name="Yu F."/>
            <person name="Miller D.J."/>
            <person name="Faraldos J.A."/>
            <person name="Zhao Y."/>
            <person name="Coates R.M."/>
            <person name="Allemann R.K."/>
            <person name="Cane D.E."/>
            <person name="Christianson D.W."/>
        </authorList>
    </citation>
    <scope>X-RAY CRYSTALLOGRAPHY (1.89 ANGSTROMS) IN COMPLEX WITH FPP; FPP ANALOGS AND MAGNESIUM</scope>
</reference>
<name>ARIS_ASPTE</name>
<evidence type="ECO:0000256" key="1">
    <source>
        <dbReference type="SAM" id="MobiDB-lite"/>
    </source>
</evidence>
<evidence type="ECO:0000269" key="2">
    <source>
    </source>
</evidence>
<evidence type="ECO:0000269" key="3">
    <source>
    </source>
</evidence>
<evidence type="ECO:0000269" key="4">
    <source>
    </source>
</evidence>
<evidence type="ECO:0000269" key="5">
    <source>
    </source>
</evidence>
<evidence type="ECO:0000305" key="6"/>
<evidence type="ECO:0007744" key="7">
    <source>
        <dbReference type="PDB" id="2E4O"/>
    </source>
</evidence>
<evidence type="ECO:0007744" key="8">
    <source>
        <dbReference type="PDB" id="2OA6"/>
    </source>
</evidence>
<evidence type="ECO:0007744" key="9">
    <source>
        <dbReference type="PDB" id="3BNX"/>
    </source>
</evidence>
<evidence type="ECO:0007744" key="10">
    <source>
        <dbReference type="PDB" id="3BNY"/>
    </source>
</evidence>
<evidence type="ECO:0007744" key="11">
    <source>
        <dbReference type="PDB" id="3CKE"/>
    </source>
</evidence>
<evidence type="ECO:0007829" key="12">
    <source>
        <dbReference type="PDB" id="4KVW"/>
    </source>
</evidence>
<evidence type="ECO:0007829" key="13">
    <source>
        <dbReference type="PDB" id="4KWD"/>
    </source>
</evidence>
<feature type="chain" id="PRO_0000418550" description="Aristolochene synthase">
    <location>
        <begin position="1"/>
        <end position="320"/>
    </location>
</feature>
<feature type="region of interest" description="Disordered" evidence="1">
    <location>
        <begin position="1"/>
        <end position="20"/>
    </location>
</feature>
<feature type="compositionally biased region" description="Polar residues" evidence="1">
    <location>
        <begin position="1"/>
        <end position="14"/>
    </location>
</feature>
<feature type="binding site" evidence="4 5">
    <location>
        <position position="90"/>
    </location>
    <ligand>
        <name>Mg(2+)</name>
        <dbReference type="ChEBI" id="CHEBI:18420"/>
        <label>1</label>
    </ligand>
</feature>
<feature type="binding site" evidence="4 5">
    <location>
        <position position="90"/>
    </location>
    <ligand>
        <name>Mg(2+)</name>
        <dbReference type="ChEBI" id="CHEBI:18420"/>
        <label>2</label>
    </ligand>
</feature>
<feature type="binding site" evidence="4 5 9">
    <location>
        <position position="219"/>
    </location>
    <ligand>
        <name>Mg(2+)</name>
        <dbReference type="ChEBI" id="CHEBI:18420"/>
        <label>3</label>
    </ligand>
</feature>
<feature type="binding site" evidence="4 5 9">
    <location>
        <position position="223"/>
    </location>
    <ligand>
        <name>Mg(2+)</name>
        <dbReference type="ChEBI" id="CHEBI:18420"/>
        <label>3</label>
    </ligand>
</feature>
<feature type="binding site" evidence="4 5 9">
    <location>
        <position position="227"/>
    </location>
    <ligand>
        <name>Mg(2+)</name>
        <dbReference type="ChEBI" id="CHEBI:18420"/>
        <label>3</label>
    </ligand>
</feature>
<feature type="binding site" evidence="5 9">
    <location>
        <position position="314"/>
    </location>
    <ligand>
        <name>(2E,6E)-farnesyl diphosphate</name>
        <dbReference type="ChEBI" id="CHEBI:175763"/>
    </ligand>
</feature>
<feature type="binding site" evidence="5 9">
    <location>
        <position position="315"/>
    </location>
    <ligand>
        <name>(2E,6E)-farnesyl diphosphate</name>
        <dbReference type="ChEBI" id="CHEBI:175763"/>
    </ligand>
</feature>
<feature type="mutagenesis site" description="Abolishes catalytic activity." evidence="3">
    <original>E</original>
    <variation>Q</variation>
    <location>
        <position position="227"/>
    </location>
</feature>
<feature type="helix" evidence="13">
    <location>
        <begin position="29"/>
        <end position="43"/>
    </location>
</feature>
<feature type="helix" evidence="13">
    <location>
        <begin position="49"/>
        <end position="58"/>
    </location>
</feature>
<feature type="helix" evidence="13">
    <location>
        <begin position="60"/>
        <end position="67"/>
    </location>
</feature>
<feature type="turn" evidence="13">
    <location>
        <begin position="73"/>
        <end position="75"/>
    </location>
</feature>
<feature type="helix" evidence="13">
    <location>
        <begin position="76"/>
        <end position="92"/>
    </location>
</feature>
<feature type="helix" evidence="13">
    <location>
        <begin position="93"/>
        <end position="95"/>
    </location>
</feature>
<feature type="helix" evidence="13">
    <location>
        <begin position="98"/>
        <end position="112"/>
    </location>
</feature>
<feature type="helix" evidence="13">
    <location>
        <begin position="123"/>
        <end position="138"/>
    </location>
</feature>
<feature type="helix" evidence="13">
    <location>
        <begin position="140"/>
        <end position="144"/>
    </location>
</feature>
<feature type="helix" evidence="13">
    <location>
        <begin position="147"/>
        <end position="157"/>
    </location>
</feature>
<feature type="helix" evidence="13">
    <location>
        <begin position="160"/>
        <end position="163"/>
    </location>
</feature>
<feature type="helix" evidence="13">
    <location>
        <begin position="168"/>
        <end position="178"/>
    </location>
</feature>
<feature type="helix" evidence="13">
    <location>
        <begin position="181"/>
        <end position="192"/>
    </location>
</feature>
<feature type="helix" evidence="13">
    <location>
        <begin position="198"/>
        <end position="203"/>
    </location>
</feature>
<feature type="helix" evidence="13">
    <location>
        <begin position="205"/>
        <end position="233"/>
    </location>
</feature>
<feature type="turn" evidence="13">
    <location>
        <begin position="236"/>
        <end position="239"/>
    </location>
</feature>
<feature type="helix" evidence="13">
    <location>
        <begin position="244"/>
        <end position="252"/>
    </location>
</feature>
<feature type="helix" evidence="13">
    <location>
        <begin position="256"/>
        <end position="283"/>
    </location>
</feature>
<feature type="turn" evidence="12">
    <location>
        <begin position="284"/>
        <end position="286"/>
    </location>
</feature>
<feature type="helix" evidence="13">
    <location>
        <begin position="289"/>
        <end position="311"/>
    </location>
</feature>
<feature type="helix" evidence="13">
    <location>
        <begin position="313"/>
        <end position="316"/>
    </location>
</feature>
<gene>
    <name type="primary">Ari1</name>
</gene>
<proteinExistence type="evidence at protein level"/>
<accession>Q9UR08</accession>
<keyword id="KW-0002">3D-structure</keyword>
<keyword id="KW-0903">Direct protein sequencing</keyword>
<keyword id="KW-0456">Lyase</keyword>
<keyword id="KW-0460">Magnesium</keyword>
<keyword id="KW-0479">Metal-binding</keyword>
<comment type="function">
    <text evidence="2 3">Catalyzes the cyclization of trans,trans-farnesyl diphosphate (FPP) to the bicyclic sesquiterpene aristolochene. Produces germacrene A as an enzyme-bound intermediate that is not released by the enzyme, but is further cyclized to produce aristolochene. Aristolochene is the likely parent compound for a number of sesquiterpenoid toxins produced by filamentous fungi.</text>
</comment>
<comment type="catalytic activity">
    <reaction evidence="2">
        <text>(2E,6E)-farnesyl diphosphate = (+)-aristolochene + diphosphate</text>
        <dbReference type="Rhea" id="RHEA:19825"/>
        <dbReference type="ChEBI" id="CHEBI:33019"/>
        <dbReference type="ChEBI" id="CHEBI:43445"/>
        <dbReference type="ChEBI" id="CHEBI:175763"/>
        <dbReference type="EC" id="4.2.3.9"/>
    </reaction>
</comment>
<comment type="cofactor">
    <cofactor evidence="5">
        <name>Mg(2+)</name>
        <dbReference type="ChEBI" id="CHEBI:18420"/>
    </cofactor>
    <text evidence="5">Binds 3 Mg(2+) ions per monomer.</text>
</comment>
<comment type="biophysicochemical properties">
    <kinetics>
        <KM evidence="2 3">13.5 nM for (2E,6E)-farnesyl diphosphate</KM>
        <Vmax evidence="2 3">23.6 nmol/min/mg enzyme</Vmax>
    </kinetics>
    <phDependence>
        <text evidence="2 3">Optimum pH is 8.0.</text>
    </phDependence>
</comment>
<comment type="pathway">
    <text>Sesquiterpene biosynthesis; aristolochene biosynthesis; aristolochene from farnesyl diphosphate: step 1/1.</text>
</comment>
<comment type="subunit">
    <text evidence="4 5">Homodimer.</text>
</comment>
<comment type="similarity">
    <text evidence="6">Belongs to the terpene synthase family.</text>
</comment>